<name>Y6202_DICDI</name>
<accession>Q54P44</accession>
<accession>Q54P43</accession>
<sequence length="199" mass="22956">MKFKRDENQNSTHHRGNKNNTNNDDDDKEEEEEIINDTTMPPLNNEEKYFLKKIFPFLPSRSSSSTSKLIFSLILDLVGFFTQIIPIFGFAFWPSISTYLIFKVYGSGLHLCVSFLEETIPGLGFIPTATCCWANEKYNIIPKVDRYLPTRYIKMVRNFISAFKKIAIAVALIAIYKIISYFSPYLPFFGGSKNHQTSY</sequence>
<evidence type="ECO:0000255" key="1"/>
<evidence type="ECO:0000256" key="2">
    <source>
        <dbReference type="SAM" id="MobiDB-lite"/>
    </source>
</evidence>
<evidence type="ECO:0000305" key="3"/>
<comment type="subcellular location">
    <subcellularLocation>
        <location evidence="3">Membrane</location>
        <topology evidence="3">Multi-pass membrane protein</topology>
    </subcellularLocation>
</comment>
<comment type="sequence caution" evidence="3">
    <conflict type="erroneous gene model prediction">
        <sequence resource="EMBL-CDS" id="EAL65053"/>
    </conflict>
</comment>
<comment type="sequence caution" evidence="3">
    <conflict type="erroneous gene model prediction">
        <sequence resource="EMBL-CDS" id="EAL65054"/>
    </conflict>
</comment>
<dbReference type="EMBL" id="AAFI02000071">
    <property type="protein sequence ID" value="EAL65053.1"/>
    <property type="status" value="ALT_SEQ"/>
    <property type="molecule type" value="Genomic_DNA"/>
</dbReference>
<dbReference type="EMBL" id="AAFI02000071">
    <property type="protein sequence ID" value="EAL65054.1"/>
    <property type="status" value="ALT_SEQ"/>
    <property type="molecule type" value="Genomic_DNA"/>
</dbReference>
<dbReference type="RefSeq" id="XP_638414.1">
    <property type="nucleotide sequence ID" value="XM_633322.1"/>
</dbReference>
<dbReference type="RefSeq" id="XP_638415.1">
    <property type="nucleotide sequence ID" value="XM_633323.1"/>
</dbReference>
<dbReference type="FunCoup" id="Q54P44">
    <property type="interactions" value="82"/>
</dbReference>
<dbReference type="PaxDb" id="44689-DDB0186202"/>
<dbReference type="EnsemblProtists" id="EAL65053">
    <property type="protein sequence ID" value="EAL65053"/>
    <property type="gene ID" value="DDB_G0284801"/>
</dbReference>
<dbReference type="EnsemblProtists" id="EAL65054">
    <property type="protein sequence ID" value="EAL65054"/>
    <property type="gene ID" value="DDB_G0284803"/>
</dbReference>
<dbReference type="GeneID" id="8624784"/>
<dbReference type="KEGG" id="ddi:DDB_G0284801"/>
<dbReference type="KEGG" id="ddi:DDB_G0284803"/>
<dbReference type="dictyBase" id="DDB_G0284801"/>
<dbReference type="VEuPathDB" id="AmoebaDB:DDB_G0284801"/>
<dbReference type="eggNOG" id="ENOG502RHX4">
    <property type="taxonomic scope" value="Eukaryota"/>
</dbReference>
<dbReference type="InParanoid" id="Q54P44"/>
<dbReference type="PRO" id="PR:Q54P44"/>
<dbReference type="Proteomes" id="UP000002195">
    <property type="component" value="Chromosome 4"/>
</dbReference>
<dbReference type="GO" id="GO:0016020">
    <property type="term" value="C:membrane"/>
    <property type="evidence" value="ECO:0007669"/>
    <property type="project" value="UniProtKB-SubCell"/>
</dbReference>
<organism>
    <name type="scientific">Dictyostelium discoideum</name>
    <name type="common">Social amoeba</name>
    <dbReference type="NCBI Taxonomy" id="44689"/>
    <lineage>
        <taxon>Eukaryota</taxon>
        <taxon>Amoebozoa</taxon>
        <taxon>Evosea</taxon>
        <taxon>Eumycetozoa</taxon>
        <taxon>Dictyostelia</taxon>
        <taxon>Dictyosteliales</taxon>
        <taxon>Dictyosteliaceae</taxon>
        <taxon>Dictyostelium</taxon>
    </lineage>
</organism>
<protein>
    <recommendedName>
        <fullName>Putative uncharacterized transmembrane protein DDB_G0284801</fullName>
    </recommendedName>
</protein>
<gene>
    <name type="ORF">DDB_G0284801</name>
</gene>
<proteinExistence type="predicted"/>
<keyword id="KW-0472">Membrane</keyword>
<keyword id="KW-1185">Reference proteome</keyword>
<keyword id="KW-0812">Transmembrane</keyword>
<keyword id="KW-1133">Transmembrane helix</keyword>
<reference key="1">
    <citation type="journal article" date="2005" name="Nature">
        <title>The genome of the social amoeba Dictyostelium discoideum.</title>
        <authorList>
            <person name="Eichinger L."/>
            <person name="Pachebat J.A."/>
            <person name="Gloeckner G."/>
            <person name="Rajandream M.A."/>
            <person name="Sucgang R."/>
            <person name="Berriman M."/>
            <person name="Song J."/>
            <person name="Olsen R."/>
            <person name="Szafranski K."/>
            <person name="Xu Q."/>
            <person name="Tunggal B."/>
            <person name="Kummerfeld S."/>
            <person name="Madera M."/>
            <person name="Konfortov B.A."/>
            <person name="Rivero F."/>
            <person name="Bankier A.T."/>
            <person name="Lehmann R."/>
            <person name="Hamlin N."/>
            <person name="Davies R."/>
            <person name="Gaudet P."/>
            <person name="Fey P."/>
            <person name="Pilcher K."/>
            <person name="Chen G."/>
            <person name="Saunders D."/>
            <person name="Sodergren E.J."/>
            <person name="Davis P."/>
            <person name="Kerhornou A."/>
            <person name="Nie X."/>
            <person name="Hall N."/>
            <person name="Anjard C."/>
            <person name="Hemphill L."/>
            <person name="Bason N."/>
            <person name="Farbrother P."/>
            <person name="Desany B."/>
            <person name="Just E."/>
            <person name="Morio T."/>
            <person name="Rost R."/>
            <person name="Churcher C.M."/>
            <person name="Cooper J."/>
            <person name="Haydock S."/>
            <person name="van Driessche N."/>
            <person name="Cronin A."/>
            <person name="Goodhead I."/>
            <person name="Muzny D.M."/>
            <person name="Mourier T."/>
            <person name="Pain A."/>
            <person name="Lu M."/>
            <person name="Harper D."/>
            <person name="Lindsay R."/>
            <person name="Hauser H."/>
            <person name="James K.D."/>
            <person name="Quiles M."/>
            <person name="Madan Babu M."/>
            <person name="Saito T."/>
            <person name="Buchrieser C."/>
            <person name="Wardroper A."/>
            <person name="Felder M."/>
            <person name="Thangavelu M."/>
            <person name="Johnson D."/>
            <person name="Knights A."/>
            <person name="Loulseged H."/>
            <person name="Mungall K.L."/>
            <person name="Oliver K."/>
            <person name="Price C."/>
            <person name="Quail M.A."/>
            <person name="Urushihara H."/>
            <person name="Hernandez J."/>
            <person name="Rabbinowitsch E."/>
            <person name="Steffen D."/>
            <person name="Sanders M."/>
            <person name="Ma J."/>
            <person name="Kohara Y."/>
            <person name="Sharp S."/>
            <person name="Simmonds M.N."/>
            <person name="Spiegler S."/>
            <person name="Tivey A."/>
            <person name="Sugano S."/>
            <person name="White B."/>
            <person name="Walker D."/>
            <person name="Woodward J.R."/>
            <person name="Winckler T."/>
            <person name="Tanaka Y."/>
            <person name="Shaulsky G."/>
            <person name="Schleicher M."/>
            <person name="Weinstock G.M."/>
            <person name="Rosenthal A."/>
            <person name="Cox E.C."/>
            <person name="Chisholm R.L."/>
            <person name="Gibbs R.A."/>
            <person name="Loomis W.F."/>
            <person name="Platzer M."/>
            <person name="Kay R.R."/>
            <person name="Williams J.G."/>
            <person name="Dear P.H."/>
            <person name="Noegel A.A."/>
            <person name="Barrell B.G."/>
            <person name="Kuspa A."/>
        </authorList>
    </citation>
    <scope>NUCLEOTIDE SEQUENCE [LARGE SCALE GENOMIC DNA]</scope>
    <source>
        <strain>AX4</strain>
    </source>
</reference>
<feature type="chain" id="PRO_0000350786" description="Putative uncharacterized transmembrane protein DDB_G0284801">
    <location>
        <begin position="1"/>
        <end position="199"/>
    </location>
</feature>
<feature type="transmembrane region" description="Helical" evidence="1">
    <location>
        <begin position="73"/>
        <end position="93"/>
    </location>
</feature>
<feature type="transmembrane region" description="Helical" evidence="1">
    <location>
        <begin position="96"/>
        <end position="116"/>
    </location>
</feature>
<feature type="transmembrane region" description="Helical" evidence="1">
    <location>
        <begin position="166"/>
        <end position="186"/>
    </location>
</feature>
<feature type="region of interest" description="Disordered" evidence="2">
    <location>
        <begin position="1"/>
        <end position="41"/>
    </location>
</feature>
<feature type="compositionally biased region" description="Acidic residues" evidence="2">
    <location>
        <begin position="23"/>
        <end position="35"/>
    </location>
</feature>